<name>DAIP_STRMB</name>
<proteinExistence type="evidence at protein level"/>
<reference key="1">
    <citation type="submission" date="2013-04" db="EMBL/GenBank/DDBJ databases">
        <title>Gene structure of the dispase autolysis-inducing protein from Streptomyces mobraensis.</title>
        <authorList>
            <person name="Zindel S."/>
            <person name="Froels S."/>
            <person name="Kletzin A."/>
            <person name="Fiebig D."/>
            <person name="Pfeifer F."/>
            <person name="Fuchsbauer H.L."/>
        </authorList>
    </citation>
    <scope>NUCLEOTIDE SEQUENCE [GENOMIC DNA]</scope>
    <source>
        <strain>ATCC 29032 / CBS 199.75 / DSM 40847 / NBRC 13819 / NCIMB 11159 / NRRL B-3729 / VKM Ac-928</strain>
    </source>
</reference>
<reference key="2">
    <citation type="journal article" date="2009" name="Biosci. Biotechnol. Biochem.">
        <title>A novel transglutaminase substrate from Streptomyces mobaraensis triggers autolysis of neutral metalloproteases.</title>
        <authorList>
            <person name="Sarafeddinov A."/>
            <person name="Schmidt S."/>
            <person name="Adolf F."/>
            <person name="Mainusch M."/>
            <person name="Bender A."/>
            <person name="Fuchsbauer H.-L."/>
        </authorList>
    </citation>
    <scope>PROTEIN SEQUENCE OF 27-49</scope>
    <scope>FUNCTION</scope>
    <scope>SUBCELLULAR LOCATION</scope>
</reference>
<dbReference type="EMBL" id="HF968455">
    <property type="protein sequence ID" value="CCW72537.1"/>
    <property type="molecule type" value="Genomic_DNA"/>
</dbReference>
<dbReference type="PDB" id="5FZP">
    <property type="method" value="X-ray"/>
    <property type="resolution" value="1.70 A"/>
    <property type="chains" value="A/B=27-374"/>
</dbReference>
<dbReference type="PDB" id="6FHP">
    <property type="method" value="X-ray"/>
    <property type="resolution" value="1.70 A"/>
    <property type="chains" value="A/B=31-372"/>
</dbReference>
<dbReference type="PDBsum" id="5FZP"/>
<dbReference type="PDBsum" id="6FHP"/>
<dbReference type="SMR" id="P84908"/>
<dbReference type="GO" id="GO:0005576">
    <property type="term" value="C:extracellular region"/>
    <property type="evidence" value="ECO:0007669"/>
    <property type="project" value="UniProtKB-SubCell"/>
</dbReference>
<dbReference type="CDD" id="cd15482">
    <property type="entry name" value="Sialidase_non-viral"/>
    <property type="match status" value="1"/>
</dbReference>
<dbReference type="Gene3D" id="2.130.10.10">
    <property type="entry name" value="YVTN repeat-like/Quinoprotein amine dehydrogenase"/>
    <property type="match status" value="2"/>
</dbReference>
<dbReference type="InterPro" id="IPR015943">
    <property type="entry name" value="WD40/YVTN_repeat-like_dom_sf"/>
</dbReference>
<dbReference type="SUPFAM" id="SSF110296">
    <property type="entry name" value="Oligoxyloglucan reducing end-specific cellobiohydrolase"/>
    <property type="match status" value="2"/>
</dbReference>
<evidence type="ECO:0000269" key="1">
    <source>
    </source>
</evidence>
<evidence type="ECO:0000303" key="2">
    <source>
    </source>
</evidence>
<evidence type="ECO:0007829" key="3">
    <source>
        <dbReference type="PDB" id="5FZP"/>
    </source>
</evidence>
<evidence type="ECO:0007829" key="4">
    <source>
        <dbReference type="PDB" id="6FHP"/>
    </source>
</evidence>
<organism>
    <name type="scientific">Streptomyces mobaraensis</name>
    <name type="common">Streptoverticillium mobaraense</name>
    <dbReference type="NCBI Taxonomy" id="35621"/>
    <lineage>
        <taxon>Bacteria</taxon>
        <taxon>Bacillati</taxon>
        <taxon>Actinomycetota</taxon>
        <taxon>Actinomycetes</taxon>
        <taxon>Kitasatosporales</taxon>
        <taxon>Streptomycetaceae</taxon>
        <taxon>Streptomyces</taxon>
    </lineage>
</organism>
<feature type="signal peptide" evidence="1">
    <location>
        <begin position="1"/>
        <end position="26"/>
    </location>
</feature>
<feature type="chain" id="PRO_0000370231" description="Dispase autolysis-inducing protein">
    <location>
        <begin position="27"/>
        <end position="374"/>
    </location>
</feature>
<feature type="strand" evidence="3">
    <location>
        <begin position="39"/>
        <end position="52"/>
    </location>
</feature>
<feature type="strand" evidence="3">
    <location>
        <begin position="60"/>
        <end position="62"/>
    </location>
</feature>
<feature type="strand" evidence="3">
    <location>
        <begin position="66"/>
        <end position="68"/>
    </location>
</feature>
<feature type="strand" evidence="3">
    <location>
        <begin position="72"/>
        <end position="75"/>
    </location>
</feature>
<feature type="strand" evidence="3">
    <location>
        <begin position="82"/>
        <end position="86"/>
    </location>
</feature>
<feature type="strand" evidence="3">
    <location>
        <begin position="89"/>
        <end position="95"/>
    </location>
</feature>
<feature type="strand" evidence="3">
    <location>
        <begin position="101"/>
        <end position="105"/>
    </location>
</feature>
<feature type="strand" evidence="3">
    <location>
        <begin position="112"/>
        <end position="115"/>
    </location>
</feature>
<feature type="turn" evidence="4">
    <location>
        <begin position="117"/>
        <end position="119"/>
    </location>
</feature>
<feature type="strand" evidence="3">
    <location>
        <begin position="120"/>
        <end position="124"/>
    </location>
</feature>
<feature type="strand" evidence="3">
    <location>
        <begin position="131"/>
        <end position="135"/>
    </location>
</feature>
<feature type="strand" evidence="3">
    <location>
        <begin position="138"/>
        <end position="141"/>
    </location>
</feature>
<feature type="strand" evidence="3">
    <location>
        <begin position="147"/>
        <end position="154"/>
    </location>
</feature>
<feature type="strand" evidence="3">
    <location>
        <begin position="162"/>
        <end position="166"/>
    </location>
</feature>
<feature type="strand" evidence="3">
    <location>
        <begin position="171"/>
        <end position="176"/>
    </location>
</feature>
<feature type="strand" evidence="3">
    <location>
        <begin position="182"/>
        <end position="185"/>
    </location>
</feature>
<feature type="strand" evidence="3">
    <location>
        <begin position="195"/>
        <end position="201"/>
    </location>
</feature>
<feature type="strand" evidence="3">
    <location>
        <begin position="204"/>
        <end position="215"/>
    </location>
</feature>
<feature type="strand" evidence="3">
    <location>
        <begin position="217"/>
        <end position="222"/>
    </location>
</feature>
<feature type="strand" evidence="3">
    <location>
        <begin position="231"/>
        <end position="236"/>
    </location>
</feature>
<feature type="strand" evidence="3">
    <location>
        <begin position="241"/>
        <end position="248"/>
    </location>
</feature>
<feature type="strand" evidence="3">
    <location>
        <begin position="256"/>
        <end position="262"/>
    </location>
</feature>
<feature type="turn" evidence="3">
    <location>
        <begin position="263"/>
        <end position="266"/>
    </location>
</feature>
<feature type="strand" evidence="3">
    <location>
        <begin position="275"/>
        <end position="286"/>
    </location>
</feature>
<feature type="strand" evidence="3">
    <location>
        <begin position="288"/>
        <end position="292"/>
    </location>
</feature>
<feature type="strand" evidence="3">
    <location>
        <begin position="295"/>
        <end position="297"/>
    </location>
</feature>
<feature type="strand" evidence="3">
    <location>
        <begin position="305"/>
        <end position="307"/>
    </location>
</feature>
<feature type="strand" evidence="3">
    <location>
        <begin position="314"/>
        <end position="321"/>
    </location>
</feature>
<feature type="helix" evidence="3">
    <location>
        <begin position="323"/>
        <end position="325"/>
    </location>
</feature>
<feature type="strand" evidence="3">
    <location>
        <begin position="327"/>
        <end position="334"/>
    </location>
</feature>
<feature type="turn" evidence="3">
    <location>
        <begin position="335"/>
        <end position="337"/>
    </location>
</feature>
<feature type="strand" evidence="3">
    <location>
        <begin position="340"/>
        <end position="355"/>
    </location>
</feature>
<feature type="strand" evidence="3">
    <location>
        <begin position="362"/>
        <end position="369"/>
    </location>
</feature>
<protein>
    <recommendedName>
        <fullName evidence="2">Dispase autolysis-inducing protein</fullName>
    </recommendedName>
</protein>
<comment type="function">
    <text evidence="1">Induces autolysis of dispase and thermolysin.</text>
</comment>
<comment type="subcellular location">
    <subcellularLocation>
        <location evidence="1">Secreted</location>
    </subcellularLocation>
</comment>
<comment type="miscellaneous">
    <text evidence="1">On the 2D-gel the determined pI of this protein is: 7.1, its MW is: 39 kDa.</text>
</comment>
<accession>P84908</accession>
<accession>N1NV52</accession>
<sequence>MKRMGWAVTAAVTTIVLAQSSLAAQAADSTSGWRAPSCTKVTGDGAVTFTTDDGATLAPTTGTLQSVSYTHGLVALDTPNTLLATHNDELQRSTDAGCTWTKVATLGSGSTWLTAATGGRAFAWEKNGGYLARVDGRTVTKLSSPSADIVGVGTDKARRDHVRLAGSDGQLYDSTDAGATWKPLGKLAFGPGASVYTVSFDPADLDHAVAGGMTTGGAVTTDGGATWTAATGLSATAGGKSNLFAASVSPADRNVVYALGIDLVEAAPNSGAEGRHLYRSTDGGRTYTRIVDDTPDTELTNSTLLAPSPVDPNVLYFEYGTYFQAYGTDLYRYDARTGKVGKTHNAHDGISAIAFNPARPSVMYLGLEEVQIHH</sequence>
<keyword id="KW-0002">3D-structure</keyword>
<keyword id="KW-0903">Direct protein sequencing</keyword>
<keyword id="KW-0964">Secreted</keyword>
<keyword id="KW-0732">Signal</keyword>
<gene>
    <name type="primary">daip</name>
</gene>